<accession>B1HMW2</accession>
<gene>
    <name evidence="1" type="primary">rpmD</name>
    <name type="ordered locus">Bsph_4596</name>
</gene>
<comment type="subunit">
    <text evidence="1">Part of the 50S ribosomal subunit.</text>
</comment>
<comment type="similarity">
    <text evidence="1">Belongs to the universal ribosomal protein uL30 family.</text>
</comment>
<comment type="sequence caution" evidence="2">
    <conflict type="erroneous initiation">
        <sequence resource="EMBL-CDS" id="ACA42040"/>
    </conflict>
</comment>
<feature type="chain" id="PRO_0000347111" description="Large ribosomal subunit protein uL30">
    <location>
        <begin position="1"/>
        <end position="60"/>
    </location>
</feature>
<reference key="1">
    <citation type="journal article" date="2008" name="J. Bacteriol.">
        <title>Complete genome sequence of the mosquitocidal bacterium Bacillus sphaericus C3-41 and comparison with those of closely related Bacillus species.</title>
        <authorList>
            <person name="Hu X."/>
            <person name="Fan W."/>
            <person name="Han B."/>
            <person name="Liu H."/>
            <person name="Zheng D."/>
            <person name="Li Q."/>
            <person name="Dong W."/>
            <person name="Yan J."/>
            <person name="Gao M."/>
            <person name="Berry C."/>
            <person name="Yuan Z."/>
        </authorList>
    </citation>
    <scope>NUCLEOTIDE SEQUENCE [LARGE SCALE GENOMIC DNA]</scope>
    <source>
        <strain>C3-41</strain>
    </source>
</reference>
<keyword id="KW-0687">Ribonucleoprotein</keyword>
<keyword id="KW-0689">Ribosomal protein</keyword>
<evidence type="ECO:0000255" key="1">
    <source>
        <dbReference type="HAMAP-Rule" id="MF_01371"/>
    </source>
</evidence>
<evidence type="ECO:0000305" key="2"/>
<sequence length="60" mass="6567">MANKLEITLTKSVIGTKPAQRKTVEALGLRKLHQTVEKADNAATRGMLDKVAHLVTVKEI</sequence>
<name>RL30_LYSSC</name>
<proteinExistence type="inferred from homology"/>
<organism>
    <name type="scientific">Lysinibacillus sphaericus (strain C3-41)</name>
    <dbReference type="NCBI Taxonomy" id="444177"/>
    <lineage>
        <taxon>Bacteria</taxon>
        <taxon>Bacillati</taxon>
        <taxon>Bacillota</taxon>
        <taxon>Bacilli</taxon>
        <taxon>Bacillales</taxon>
        <taxon>Bacillaceae</taxon>
        <taxon>Lysinibacillus</taxon>
    </lineage>
</organism>
<protein>
    <recommendedName>
        <fullName evidence="1">Large ribosomal subunit protein uL30</fullName>
    </recommendedName>
    <alternativeName>
        <fullName evidence="2">50S ribosomal protein L30</fullName>
    </alternativeName>
</protein>
<dbReference type="EMBL" id="CP000817">
    <property type="protein sequence ID" value="ACA42040.1"/>
    <property type="status" value="ALT_INIT"/>
    <property type="molecule type" value="Genomic_DNA"/>
</dbReference>
<dbReference type="RefSeq" id="WP_004233668.1">
    <property type="nucleotide sequence ID" value="NC_010382.1"/>
</dbReference>
<dbReference type="SMR" id="B1HMW2"/>
<dbReference type="EnsemblBacteria" id="ACA42040">
    <property type="protein sequence ID" value="ACA42040"/>
    <property type="gene ID" value="Bsph_4596"/>
</dbReference>
<dbReference type="GeneID" id="74907547"/>
<dbReference type="KEGG" id="lsp:Bsph_4596"/>
<dbReference type="HOGENOM" id="CLU_131047_2_1_9"/>
<dbReference type="Proteomes" id="UP000002164">
    <property type="component" value="Chromosome"/>
</dbReference>
<dbReference type="GO" id="GO:0022625">
    <property type="term" value="C:cytosolic large ribosomal subunit"/>
    <property type="evidence" value="ECO:0007669"/>
    <property type="project" value="TreeGrafter"/>
</dbReference>
<dbReference type="GO" id="GO:0003735">
    <property type="term" value="F:structural constituent of ribosome"/>
    <property type="evidence" value="ECO:0007669"/>
    <property type="project" value="InterPro"/>
</dbReference>
<dbReference type="GO" id="GO:0006412">
    <property type="term" value="P:translation"/>
    <property type="evidence" value="ECO:0007669"/>
    <property type="project" value="UniProtKB-UniRule"/>
</dbReference>
<dbReference type="CDD" id="cd01658">
    <property type="entry name" value="Ribosomal_L30"/>
    <property type="match status" value="1"/>
</dbReference>
<dbReference type="FunFam" id="3.30.1390.20:FF:000001">
    <property type="entry name" value="50S ribosomal protein L30"/>
    <property type="match status" value="1"/>
</dbReference>
<dbReference type="Gene3D" id="3.30.1390.20">
    <property type="entry name" value="Ribosomal protein L30, ferredoxin-like fold domain"/>
    <property type="match status" value="1"/>
</dbReference>
<dbReference type="HAMAP" id="MF_01371_B">
    <property type="entry name" value="Ribosomal_uL30_B"/>
    <property type="match status" value="1"/>
</dbReference>
<dbReference type="InterPro" id="IPR036919">
    <property type="entry name" value="Ribo_uL30_ferredoxin-like_sf"/>
</dbReference>
<dbReference type="InterPro" id="IPR005996">
    <property type="entry name" value="Ribosomal_uL30_bac-type"/>
</dbReference>
<dbReference type="InterPro" id="IPR018038">
    <property type="entry name" value="Ribosomal_uL30_CS"/>
</dbReference>
<dbReference type="InterPro" id="IPR016082">
    <property type="entry name" value="Ribosomal_uL30_ferredoxin-like"/>
</dbReference>
<dbReference type="NCBIfam" id="TIGR01308">
    <property type="entry name" value="rpmD_bact"/>
    <property type="match status" value="1"/>
</dbReference>
<dbReference type="PANTHER" id="PTHR15892:SF2">
    <property type="entry name" value="LARGE RIBOSOMAL SUBUNIT PROTEIN UL30M"/>
    <property type="match status" value="1"/>
</dbReference>
<dbReference type="PANTHER" id="PTHR15892">
    <property type="entry name" value="MITOCHONDRIAL RIBOSOMAL PROTEIN L30"/>
    <property type="match status" value="1"/>
</dbReference>
<dbReference type="Pfam" id="PF00327">
    <property type="entry name" value="Ribosomal_L30"/>
    <property type="match status" value="1"/>
</dbReference>
<dbReference type="PIRSF" id="PIRSF002211">
    <property type="entry name" value="Ribosomal_L30_bac-type"/>
    <property type="match status" value="1"/>
</dbReference>
<dbReference type="SUPFAM" id="SSF55129">
    <property type="entry name" value="Ribosomal protein L30p/L7e"/>
    <property type="match status" value="1"/>
</dbReference>
<dbReference type="PROSITE" id="PS00634">
    <property type="entry name" value="RIBOSOMAL_L30"/>
    <property type="match status" value="1"/>
</dbReference>